<reference key="1">
    <citation type="journal article" date="2005" name="J. Bacteriol.">
        <title>Insights into genome plasticity and pathogenicity of the plant pathogenic Bacterium Xanthomonas campestris pv. vesicatoria revealed by the complete genome sequence.</title>
        <authorList>
            <person name="Thieme F."/>
            <person name="Koebnik R."/>
            <person name="Bekel T."/>
            <person name="Berger C."/>
            <person name="Boch J."/>
            <person name="Buettner D."/>
            <person name="Caldana C."/>
            <person name="Gaigalat L."/>
            <person name="Goesmann A."/>
            <person name="Kay S."/>
            <person name="Kirchner O."/>
            <person name="Lanz C."/>
            <person name="Linke B."/>
            <person name="McHardy A.C."/>
            <person name="Meyer F."/>
            <person name="Mittenhuber G."/>
            <person name="Nies D.H."/>
            <person name="Niesbach-Kloesgen U."/>
            <person name="Patschkowski T."/>
            <person name="Rueckert C."/>
            <person name="Rupp O."/>
            <person name="Schneiker S."/>
            <person name="Schuster S.C."/>
            <person name="Vorhoelter F.J."/>
            <person name="Weber E."/>
            <person name="Puehler A."/>
            <person name="Bonas U."/>
            <person name="Bartels D."/>
            <person name="Kaiser O."/>
        </authorList>
    </citation>
    <scope>NUCLEOTIDE SEQUENCE [LARGE SCALE GENOMIC DNA]</scope>
    <source>
        <strain>85-10</strain>
    </source>
</reference>
<name>RL36_XANE5</name>
<feature type="chain" id="PRO_0000302333" description="Large ribosomal subunit protein bL36">
    <location>
        <begin position="1"/>
        <end position="41"/>
    </location>
</feature>
<evidence type="ECO:0000255" key="1">
    <source>
        <dbReference type="HAMAP-Rule" id="MF_00251"/>
    </source>
</evidence>
<evidence type="ECO:0000305" key="2"/>
<proteinExistence type="inferred from homology"/>
<keyword id="KW-0687">Ribonucleoprotein</keyword>
<keyword id="KW-0689">Ribosomal protein</keyword>
<sequence>MKVLSSLKSAKTRHRDCKVVRRRGKVFVICKSNPRFKARQR</sequence>
<gene>
    <name evidence="1" type="primary">rpmJ</name>
    <name type="ordered locus">XCV2498</name>
</gene>
<comment type="similarity">
    <text evidence="1">Belongs to the bacterial ribosomal protein bL36 family.</text>
</comment>
<organism>
    <name type="scientific">Xanthomonas euvesicatoria pv. vesicatoria (strain 85-10)</name>
    <name type="common">Xanthomonas campestris pv. vesicatoria</name>
    <dbReference type="NCBI Taxonomy" id="316273"/>
    <lineage>
        <taxon>Bacteria</taxon>
        <taxon>Pseudomonadati</taxon>
        <taxon>Pseudomonadota</taxon>
        <taxon>Gammaproteobacteria</taxon>
        <taxon>Lysobacterales</taxon>
        <taxon>Lysobacteraceae</taxon>
        <taxon>Xanthomonas</taxon>
    </lineage>
</organism>
<dbReference type="EMBL" id="AM039952">
    <property type="protein sequence ID" value="CAJ24175.1"/>
    <property type="molecule type" value="Genomic_DNA"/>
</dbReference>
<dbReference type="SMR" id="Q3BSN4"/>
<dbReference type="STRING" id="456327.BJD11_10410"/>
<dbReference type="KEGG" id="xcv:XCV2498"/>
<dbReference type="eggNOG" id="COG0257">
    <property type="taxonomic scope" value="Bacteria"/>
</dbReference>
<dbReference type="HOGENOM" id="CLU_135723_3_3_6"/>
<dbReference type="Proteomes" id="UP000007069">
    <property type="component" value="Chromosome"/>
</dbReference>
<dbReference type="GO" id="GO:1990904">
    <property type="term" value="C:ribonucleoprotein complex"/>
    <property type="evidence" value="ECO:0007669"/>
    <property type="project" value="UniProtKB-KW"/>
</dbReference>
<dbReference type="GO" id="GO:0005840">
    <property type="term" value="C:ribosome"/>
    <property type="evidence" value="ECO:0007669"/>
    <property type="project" value="UniProtKB-KW"/>
</dbReference>
<dbReference type="GO" id="GO:0003735">
    <property type="term" value="F:structural constituent of ribosome"/>
    <property type="evidence" value="ECO:0007669"/>
    <property type="project" value="InterPro"/>
</dbReference>
<dbReference type="GO" id="GO:0006412">
    <property type="term" value="P:translation"/>
    <property type="evidence" value="ECO:0007669"/>
    <property type="project" value="UniProtKB-UniRule"/>
</dbReference>
<dbReference type="HAMAP" id="MF_00251">
    <property type="entry name" value="Ribosomal_bL36"/>
    <property type="match status" value="1"/>
</dbReference>
<dbReference type="InterPro" id="IPR000473">
    <property type="entry name" value="Ribosomal_bL36"/>
</dbReference>
<dbReference type="InterPro" id="IPR035977">
    <property type="entry name" value="Ribosomal_bL36_sp"/>
</dbReference>
<dbReference type="InterPro" id="IPR047621">
    <property type="entry name" value="Ribosomal_L36_bact"/>
</dbReference>
<dbReference type="NCBIfam" id="NF002021">
    <property type="entry name" value="PRK00831.1"/>
    <property type="match status" value="1"/>
</dbReference>
<dbReference type="NCBIfam" id="TIGR01022">
    <property type="entry name" value="rpmJ_bact"/>
    <property type="match status" value="1"/>
</dbReference>
<dbReference type="PANTHER" id="PTHR47781">
    <property type="entry name" value="50S RIBOSOMAL PROTEIN L36 2"/>
    <property type="match status" value="1"/>
</dbReference>
<dbReference type="PANTHER" id="PTHR47781:SF1">
    <property type="entry name" value="LARGE RIBOSOMAL SUBUNIT PROTEIN BL36B"/>
    <property type="match status" value="1"/>
</dbReference>
<dbReference type="Pfam" id="PF00444">
    <property type="entry name" value="Ribosomal_L36"/>
    <property type="match status" value="1"/>
</dbReference>
<dbReference type="SUPFAM" id="SSF57840">
    <property type="entry name" value="Ribosomal protein L36"/>
    <property type="match status" value="1"/>
</dbReference>
<dbReference type="PROSITE" id="PS00828">
    <property type="entry name" value="RIBOSOMAL_L36"/>
    <property type="match status" value="1"/>
</dbReference>
<protein>
    <recommendedName>
        <fullName evidence="1">Large ribosomal subunit protein bL36</fullName>
    </recommendedName>
    <alternativeName>
        <fullName evidence="2">50S ribosomal protein L36</fullName>
    </alternativeName>
</protein>
<accession>Q3BSN4</accession>